<gene>
    <name type="primary">MPC1</name>
    <name type="synonym">BRP44L</name>
    <name type="ORF">CGI-129</name>
    <name type="ORF">HSPC040</name>
    <name type="ORF">PNAS-115</name>
</gene>
<name>MPC1_HUMAN</name>
<comment type="function">
    <text evidence="3 4 5">Mediates the uptake of pyruvate into mitochondria.</text>
</comment>
<comment type="catalytic activity">
    <reaction evidence="3 4 5">
        <text>pyruvate(out) + H(+)(out) = pyruvate(in) + H(+)(in)</text>
        <dbReference type="Rhea" id="RHEA:64720"/>
        <dbReference type="ChEBI" id="CHEBI:15361"/>
        <dbReference type="ChEBI" id="CHEBI:15378"/>
    </reaction>
</comment>
<comment type="subunit">
    <text evidence="4 6">Homodimer (PubMed:32403431). Forms heterodimer with MPC2. The heterodimer is the more stable and dominant form (PubMed:26253029, PubMed:32403431).</text>
</comment>
<comment type="interaction">
    <interactant intactId="EBI-721137">
        <id>Q9Y5U8</id>
    </interactant>
    <interactant intactId="EBI-719403">
        <id>O95563</id>
        <label>MPC2</label>
    </interactant>
    <organismsDiffer>false</organismsDiffer>
    <experiments>9</experiments>
</comment>
<comment type="subcellular location">
    <subcellularLocation>
        <location evidence="3 4">Mitochondrion inner membrane</location>
        <topology evidence="2">Multi-pass membrane protein</topology>
    </subcellularLocation>
</comment>
<comment type="disease" evidence="3">
    <disease id="DI-03497">
        <name>Mitochondrial pyruvate carrier deficiency</name>
        <acronym>MPYCD</acronym>
        <description>An autosomal recessive metabolic disorder characterized by severely delayed psychomotor development, mild dysmorphic features, hepatomegaly, marked metabolic acidosis, hyperlactacidemia with normal lactate/pyruvate, and encephalopathy. Some patients have epilepsy and peripheral neuropathy.</description>
        <dbReference type="MIM" id="614741"/>
    </disease>
    <text>The disease is caused by variants affecting the gene represented in this entry.</text>
</comment>
<comment type="similarity">
    <text evidence="7">Belongs to the mitochondrial pyruvate carrier (MPC) (TC 2.A.105) family.</text>
</comment>
<comment type="sequence caution" evidence="7">
    <conflict type="erroneous initiation">
        <sequence resource="EMBL-CDS" id="AAG23822"/>
    </conflict>
    <text>Truncated N-terminus.</text>
</comment>
<evidence type="ECO:0000250" key="1">
    <source>
        <dbReference type="UniProtKB" id="P63030"/>
    </source>
</evidence>
<evidence type="ECO:0000255" key="2"/>
<evidence type="ECO:0000269" key="3">
    <source>
    </source>
</evidence>
<evidence type="ECO:0000269" key="4">
    <source>
    </source>
</evidence>
<evidence type="ECO:0000269" key="5">
    <source>
    </source>
</evidence>
<evidence type="ECO:0000269" key="6">
    <source>
    </source>
</evidence>
<evidence type="ECO:0000305" key="7"/>
<evidence type="ECO:0000305" key="8">
    <source>
    </source>
</evidence>
<evidence type="ECO:0007744" key="9">
    <source>
    </source>
</evidence>
<reference key="1">
    <citation type="journal article" date="2000" name="Genome Res.">
        <title>Cloning and functional analysis of cDNAs with open reading frames for 300 previously undefined genes expressed in CD34+ hematopoietic stem/progenitor cells.</title>
        <authorList>
            <person name="Zhang Q.-H."/>
            <person name="Ye M."/>
            <person name="Wu X.-Y."/>
            <person name="Ren S.-X."/>
            <person name="Zhao M."/>
            <person name="Zhao C.-J."/>
            <person name="Fu G."/>
            <person name="Shen Y."/>
            <person name="Fan H.-Y."/>
            <person name="Lu G."/>
            <person name="Zhong M."/>
            <person name="Xu X.-R."/>
            <person name="Han Z.-G."/>
            <person name="Zhang J.-W."/>
            <person name="Tao J."/>
            <person name="Huang Q.-H."/>
            <person name="Zhou J."/>
            <person name="Hu G.-X."/>
            <person name="Gu J."/>
            <person name="Chen S.-J."/>
            <person name="Chen Z."/>
        </authorList>
    </citation>
    <scope>NUCLEOTIDE SEQUENCE [LARGE SCALE MRNA]</scope>
    <source>
        <tissue>Umbilical cord blood</tissue>
    </source>
</reference>
<reference key="2">
    <citation type="journal article" date="2000" name="Genome Res.">
        <title>Identification of novel human genes evolutionarily conserved in Caenorhabditis elegans by comparative proteomics.</title>
        <authorList>
            <person name="Lai C.-H."/>
            <person name="Chou C.-Y."/>
            <person name="Ch'ang L.-Y."/>
            <person name="Liu C.-S."/>
            <person name="Lin W.-C."/>
        </authorList>
    </citation>
    <scope>NUCLEOTIDE SEQUENCE [LARGE SCALE MRNA]</scope>
</reference>
<reference key="3">
    <citation type="journal article" date="2004" name="Nat. Genet.">
        <title>Complete sequencing and characterization of 21,243 full-length human cDNAs.</title>
        <authorList>
            <person name="Ota T."/>
            <person name="Suzuki Y."/>
            <person name="Nishikawa T."/>
            <person name="Otsuki T."/>
            <person name="Sugiyama T."/>
            <person name="Irie R."/>
            <person name="Wakamatsu A."/>
            <person name="Hayashi K."/>
            <person name="Sato H."/>
            <person name="Nagai K."/>
            <person name="Kimura K."/>
            <person name="Makita H."/>
            <person name="Sekine M."/>
            <person name="Obayashi M."/>
            <person name="Nishi T."/>
            <person name="Shibahara T."/>
            <person name="Tanaka T."/>
            <person name="Ishii S."/>
            <person name="Yamamoto J."/>
            <person name="Saito K."/>
            <person name="Kawai Y."/>
            <person name="Isono Y."/>
            <person name="Nakamura Y."/>
            <person name="Nagahari K."/>
            <person name="Murakami K."/>
            <person name="Yasuda T."/>
            <person name="Iwayanagi T."/>
            <person name="Wagatsuma M."/>
            <person name="Shiratori A."/>
            <person name="Sudo H."/>
            <person name="Hosoiri T."/>
            <person name="Kaku Y."/>
            <person name="Kodaira H."/>
            <person name="Kondo H."/>
            <person name="Sugawara M."/>
            <person name="Takahashi M."/>
            <person name="Kanda K."/>
            <person name="Yokoi T."/>
            <person name="Furuya T."/>
            <person name="Kikkawa E."/>
            <person name="Omura Y."/>
            <person name="Abe K."/>
            <person name="Kamihara K."/>
            <person name="Katsuta N."/>
            <person name="Sato K."/>
            <person name="Tanikawa M."/>
            <person name="Yamazaki M."/>
            <person name="Ninomiya K."/>
            <person name="Ishibashi T."/>
            <person name="Yamashita H."/>
            <person name="Murakawa K."/>
            <person name="Fujimori K."/>
            <person name="Tanai H."/>
            <person name="Kimata M."/>
            <person name="Watanabe M."/>
            <person name="Hiraoka S."/>
            <person name="Chiba Y."/>
            <person name="Ishida S."/>
            <person name="Ono Y."/>
            <person name="Takiguchi S."/>
            <person name="Watanabe S."/>
            <person name="Yosida M."/>
            <person name="Hotuta T."/>
            <person name="Kusano J."/>
            <person name="Kanehori K."/>
            <person name="Takahashi-Fujii A."/>
            <person name="Hara H."/>
            <person name="Tanase T.-O."/>
            <person name="Nomura Y."/>
            <person name="Togiya S."/>
            <person name="Komai F."/>
            <person name="Hara R."/>
            <person name="Takeuchi K."/>
            <person name="Arita M."/>
            <person name="Imose N."/>
            <person name="Musashino K."/>
            <person name="Yuuki H."/>
            <person name="Oshima A."/>
            <person name="Sasaki N."/>
            <person name="Aotsuka S."/>
            <person name="Yoshikawa Y."/>
            <person name="Matsunawa H."/>
            <person name="Ichihara T."/>
            <person name="Shiohata N."/>
            <person name="Sano S."/>
            <person name="Moriya S."/>
            <person name="Momiyama H."/>
            <person name="Satoh N."/>
            <person name="Takami S."/>
            <person name="Terashima Y."/>
            <person name="Suzuki O."/>
            <person name="Nakagawa S."/>
            <person name="Senoh A."/>
            <person name="Mizoguchi H."/>
            <person name="Goto Y."/>
            <person name="Shimizu F."/>
            <person name="Wakebe H."/>
            <person name="Hishigaki H."/>
            <person name="Watanabe T."/>
            <person name="Sugiyama A."/>
            <person name="Takemoto M."/>
            <person name="Kawakami B."/>
            <person name="Yamazaki M."/>
            <person name="Watanabe K."/>
            <person name="Kumagai A."/>
            <person name="Itakura S."/>
            <person name="Fukuzumi Y."/>
            <person name="Fujimori Y."/>
            <person name="Komiyama M."/>
            <person name="Tashiro H."/>
            <person name="Tanigami A."/>
            <person name="Fujiwara T."/>
            <person name="Ono T."/>
            <person name="Yamada K."/>
            <person name="Fujii Y."/>
            <person name="Ozaki K."/>
            <person name="Hirao M."/>
            <person name="Ohmori Y."/>
            <person name="Kawabata A."/>
            <person name="Hikiji T."/>
            <person name="Kobatake N."/>
            <person name="Inagaki H."/>
            <person name="Ikema Y."/>
            <person name="Okamoto S."/>
            <person name="Okitani R."/>
            <person name="Kawakami T."/>
            <person name="Noguchi S."/>
            <person name="Itoh T."/>
            <person name="Shigeta K."/>
            <person name="Senba T."/>
            <person name="Matsumura K."/>
            <person name="Nakajima Y."/>
            <person name="Mizuno T."/>
            <person name="Morinaga M."/>
            <person name="Sasaki M."/>
            <person name="Togashi T."/>
            <person name="Oyama M."/>
            <person name="Hata H."/>
            <person name="Watanabe M."/>
            <person name="Komatsu T."/>
            <person name="Mizushima-Sugano J."/>
            <person name="Satoh T."/>
            <person name="Shirai Y."/>
            <person name="Takahashi Y."/>
            <person name="Nakagawa K."/>
            <person name="Okumura K."/>
            <person name="Nagase T."/>
            <person name="Nomura N."/>
            <person name="Kikuchi H."/>
            <person name="Masuho Y."/>
            <person name="Yamashita R."/>
            <person name="Nakai K."/>
            <person name="Yada T."/>
            <person name="Nakamura Y."/>
            <person name="Ohara O."/>
            <person name="Isogai T."/>
            <person name="Sugano S."/>
        </authorList>
    </citation>
    <scope>NUCLEOTIDE SEQUENCE [LARGE SCALE MRNA]</scope>
    <source>
        <tissue>Skeletal muscle</tissue>
    </source>
</reference>
<reference key="4">
    <citation type="journal article" date="2003" name="Nature">
        <title>The DNA sequence and analysis of human chromosome 6.</title>
        <authorList>
            <person name="Mungall A.J."/>
            <person name="Palmer S.A."/>
            <person name="Sims S.K."/>
            <person name="Edwards C.A."/>
            <person name="Ashurst J.L."/>
            <person name="Wilming L."/>
            <person name="Jones M.C."/>
            <person name="Horton R."/>
            <person name="Hunt S.E."/>
            <person name="Scott C.E."/>
            <person name="Gilbert J.G.R."/>
            <person name="Clamp M.E."/>
            <person name="Bethel G."/>
            <person name="Milne S."/>
            <person name="Ainscough R."/>
            <person name="Almeida J.P."/>
            <person name="Ambrose K.D."/>
            <person name="Andrews T.D."/>
            <person name="Ashwell R.I.S."/>
            <person name="Babbage A.K."/>
            <person name="Bagguley C.L."/>
            <person name="Bailey J."/>
            <person name="Banerjee R."/>
            <person name="Barker D.J."/>
            <person name="Barlow K.F."/>
            <person name="Bates K."/>
            <person name="Beare D.M."/>
            <person name="Beasley H."/>
            <person name="Beasley O."/>
            <person name="Bird C.P."/>
            <person name="Blakey S.E."/>
            <person name="Bray-Allen S."/>
            <person name="Brook J."/>
            <person name="Brown A.J."/>
            <person name="Brown J.Y."/>
            <person name="Burford D.C."/>
            <person name="Burrill W."/>
            <person name="Burton J."/>
            <person name="Carder C."/>
            <person name="Carter N.P."/>
            <person name="Chapman J.C."/>
            <person name="Clark S.Y."/>
            <person name="Clark G."/>
            <person name="Clee C.M."/>
            <person name="Clegg S."/>
            <person name="Cobley V."/>
            <person name="Collier R.E."/>
            <person name="Collins J.E."/>
            <person name="Colman L.K."/>
            <person name="Corby N.R."/>
            <person name="Coville G.J."/>
            <person name="Culley K.M."/>
            <person name="Dhami P."/>
            <person name="Davies J."/>
            <person name="Dunn M."/>
            <person name="Earthrowl M.E."/>
            <person name="Ellington A.E."/>
            <person name="Evans K.A."/>
            <person name="Faulkner L."/>
            <person name="Francis M.D."/>
            <person name="Frankish A."/>
            <person name="Frankland J."/>
            <person name="French L."/>
            <person name="Garner P."/>
            <person name="Garnett J."/>
            <person name="Ghori M.J."/>
            <person name="Gilby L.M."/>
            <person name="Gillson C.J."/>
            <person name="Glithero R.J."/>
            <person name="Grafham D.V."/>
            <person name="Grant M."/>
            <person name="Gribble S."/>
            <person name="Griffiths C."/>
            <person name="Griffiths M.N.D."/>
            <person name="Hall R."/>
            <person name="Halls K.S."/>
            <person name="Hammond S."/>
            <person name="Harley J.L."/>
            <person name="Hart E.A."/>
            <person name="Heath P.D."/>
            <person name="Heathcott R."/>
            <person name="Holmes S.J."/>
            <person name="Howden P.J."/>
            <person name="Howe K.L."/>
            <person name="Howell G.R."/>
            <person name="Huckle E."/>
            <person name="Humphray S.J."/>
            <person name="Humphries M.D."/>
            <person name="Hunt A.R."/>
            <person name="Johnson C.M."/>
            <person name="Joy A.A."/>
            <person name="Kay M."/>
            <person name="Keenan S.J."/>
            <person name="Kimberley A.M."/>
            <person name="King A."/>
            <person name="Laird G.K."/>
            <person name="Langford C."/>
            <person name="Lawlor S."/>
            <person name="Leongamornlert D.A."/>
            <person name="Leversha M."/>
            <person name="Lloyd C.R."/>
            <person name="Lloyd D.M."/>
            <person name="Loveland J.E."/>
            <person name="Lovell J."/>
            <person name="Martin S."/>
            <person name="Mashreghi-Mohammadi M."/>
            <person name="Maslen G.L."/>
            <person name="Matthews L."/>
            <person name="McCann O.T."/>
            <person name="McLaren S.J."/>
            <person name="McLay K."/>
            <person name="McMurray A."/>
            <person name="Moore M.J.F."/>
            <person name="Mullikin J.C."/>
            <person name="Niblett D."/>
            <person name="Nickerson T."/>
            <person name="Novik K.L."/>
            <person name="Oliver K."/>
            <person name="Overton-Larty E.K."/>
            <person name="Parker A."/>
            <person name="Patel R."/>
            <person name="Pearce A.V."/>
            <person name="Peck A.I."/>
            <person name="Phillimore B.J.C.T."/>
            <person name="Phillips S."/>
            <person name="Plumb R.W."/>
            <person name="Porter K.M."/>
            <person name="Ramsey Y."/>
            <person name="Ranby S.A."/>
            <person name="Rice C.M."/>
            <person name="Ross M.T."/>
            <person name="Searle S.M."/>
            <person name="Sehra H.K."/>
            <person name="Sheridan E."/>
            <person name="Skuce C.D."/>
            <person name="Smith S."/>
            <person name="Smith M."/>
            <person name="Spraggon L."/>
            <person name="Squares S.L."/>
            <person name="Steward C.A."/>
            <person name="Sycamore N."/>
            <person name="Tamlyn-Hall G."/>
            <person name="Tester J."/>
            <person name="Theaker A.J."/>
            <person name="Thomas D.W."/>
            <person name="Thorpe A."/>
            <person name="Tracey A."/>
            <person name="Tromans A."/>
            <person name="Tubby B."/>
            <person name="Wall M."/>
            <person name="Wallis J.M."/>
            <person name="West A.P."/>
            <person name="White S.S."/>
            <person name="Whitehead S.L."/>
            <person name="Whittaker H."/>
            <person name="Wild A."/>
            <person name="Willey D.J."/>
            <person name="Wilmer T.E."/>
            <person name="Wood J.M."/>
            <person name="Wray P.W."/>
            <person name="Wyatt J.C."/>
            <person name="Young L."/>
            <person name="Younger R.M."/>
            <person name="Bentley D.R."/>
            <person name="Coulson A."/>
            <person name="Durbin R.M."/>
            <person name="Hubbard T."/>
            <person name="Sulston J.E."/>
            <person name="Dunham I."/>
            <person name="Rogers J."/>
            <person name="Beck S."/>
        </authorList>
    </citation>
    <scope>NUCLEOTIDE SEQUENCE [LARGE SCALE GENOMIC DNA]</scope>
</reference>
<reference key="5">
    <citation type="journal article" date="2004" name="Genome Res.">
        <title>The status, quality, and expansion of the NIH full-length cDNA project: the Mammalian Gene Collection (MGC).</title>
        <authorList>
            <consortium name="The MGC Project Team"/>
        </authorList>
    </citation>
    <scope>NUCLEOTIDE SEQUENCE [LARGE SCALE MRNA]</scope>
    <source>
        <tissue>Placenta</tissue>
    </source>
</reference>
<reference key="6">
    <citation type="submission" date="2000-06" db="EMBL/GenBank/DDBJ databases">
        <title>Human acute promyelocytic leukemia cell line NB4's apoptosis related genes.</title>
        <authorList>
            <person name="Yu W.-Q."/>
            <person name="Chai Y.-B."/>
            <person name="Sun B.-Z."/>
            <person name="Zhu F."/>
            <person name="Liu X.-S."/>
            <person name="Li Z."/>
            <person name="Lu F."/>
            <person name="Yan W."/>
            <person name="Yang H."/>
            <person name="Zhao Z.-L."/>
        </authorList>
    </citation>
    <scope>NUCLEOTIDE SEQUENCE [LARGE SCALE MRNA] OF 53-109</scope>
    <source>
        <tissue>Promyelocytic leukemia</tissue>
    </source>
</reference>
<reference key="7">
    <citation type="journal article" date="2011" name="BMC Syst. Biol.">
        <title>Initial characterization of the human central proteome.</title>
        <authorList>
            <person name="Burkard T.R."/>
            <person name="Planyavsky M."/>
            <person name="Kaupe I."/>
            <person name="Breitwieser F.P."/>
            <person name="Buerckstuemmer T."/>
            <person name="Bennett K.L."/>
            <person name="Superti-Furga G."/>
            <person name="Colinge J."/>
        </authorList>
    </citation>
    <scope>IDENTIFICATION BY MASS SPECTROMETRY [LARGE SCALE ANALYSIS]</scope>
</reference>
<reference key="8">
    <citation type="journal article" date="2012" name="Science">
        <title>A mitochondrial pyruvate carrier required for pyruvate uptake in yeast, Drosophila, and humans.</title>
        <authorList>
            <person name="Bricker D.K."/>
            <person name="Taylor E.B."/>
            <person name="Schell J.C."/>
            <person name="Orsak T."/>
            <person name="Boutron A."/>
            <person name="Chen Y.C."/>
            <person name="Cox J.E."/>
            <person name="Cardon C.M."/>
            <person name="Van Vranken J.G."/>
            <person name="Dephoure N."/>
            <person name="Redin C."/>
            <person name="Boudina S."/>
            <person name="Gygi S.P."/>
            <person name="Brivet M."/>
            <person name="Thummel C.S."/>
            <person name="Rutter J."/>
        </authorList>
    </citation>
    <scope>FUNCTION</scope>
    <scope>SUBCELLULAR LOCATION</scope>
    <scope>VARIANTS MPYCD HIS-79 AND TRP-97</scope>
    <scope>TRANSPORTER ACTIVITY</scope>
</reference>
<reference key="9">
    <citation type="journal article" date="2015" name="Mol. Cell">
        <title>Monitoring Mitochondrial Pyruvate Carrier Activity in Real Time Using a BRET-Based Biosensor: Investigation of the Warburg Effect.</title>
        <authorList>
            <person name="Compan V."/>
            <person name="Pierredon S."/>
            <person name="Vanderperre B."/>
            <person name="Krznar P."/>
            <person name="Marchiq I."/>
            <person name="Zamboni N."/>
            <person name="Pouyssegur J."/>
            <person name="Martinou J.C."/>
        </authorList>
    </citation>
    <scope>FUNCTION</scope>
    <scope>TRANSPORTER ACTIVITY</scope>
    <scope>SUBUNIT</scope>
    <scope>SUBCELLULAR LOCATION</scope>
</reference>
<reference key="10">
    <citation type="journal article" date="2014" name="J. Proteomics">
        <title>An enzyme assisted RP-RPLC approach for in-depth analysis of human liver phosphoproteome.</title>
        <authorList>
            <person name="Bian Y."/>
            <person name="Song C."/>
            <person name="Cheng K."/>
            <person name="Dong M."/>
            <person name="Wang F."/>
            <person name="Huang J."/>
            <person name="Sun D."/>
            <person name="Wang L."/>
            <person name="Ye M."/>
            <person name="Zou H."/>
        </authorList>
    </citation>
    <scope>IDENTIFICATION BY MASS SPECTROMETRY [LARGE SCALE ANALYSIS]</scope>
    <source>
        <tissue>Liver</tissue>
    </source>
</reference>
<reference key="11">
    <citation type="journal article" date="2015" name="Proteomics">
        <title>N-terminome analysis of the human mitochondrial proteome.</title>
        <authorList>
            <person name="Vaca Jacome A.S."/>
            <person name="Rabilloud T."/>
            <person name="Schaeffer-Reiss C."/>
            <person name="Rompais M."/>
            <person name="Ayoub D."/>
            <person name="Lane L."/>
            <person name="Bairoch A."/>
            <person name="Van Dorsselaer A."/>
            <person name="Carapito C."/>
        </authorList>
    </citation>
    <scope>ACETYLATION [LARGE SCALE ANALYSIS] AT ALA-2</scope>
    <scope>CLEAVAGE OF INITIATOR METHIONINE [LARGE SCALE ANALYSIS]</scope>
    <scope>IDENTIFICATION BY MASS SPECTROMETRY [LARGE SCALE ANALYSIS]</scope>
</reference>
<reference key="12">
    <citation type="journal article" date="2016" name="J. Biol. Chem.">
        <title>MPC1-like Is a Placental Mammal-specific Mitochondrial Pyruvate Carrier Subunit Expressed in Postmeiotic Male Germ Cells.</title>
        <authorList>
            <person name="Vanderperre B."/>
            <person name="Cermakova K."/>
            <person name="Escoffier J."/>
            <person name="Kaba M."/>
            <person name="Bender T."/>
            <person name="Nef S."/>
            <person name="Martinou J.C."/>
        </authorList>
    </citation>
    <scope>FUNCTION</scope>
    <scope>TRANSPORTER ACTIVITY</scope>
    <scope>TOPOLOGY</scope>
</reference>
<reference key="13">
    <citation type="journal article" date="2020" name="Int. J. Mol. Sci.">
        <title>Characteristic Analysis of Homo- and Heterodimeric Complexes of Human Mitochondrial Pyruvate Carrier Related to Metabolic Diseases.</title>
        <authorList>
            <person name="Lee J."/>
            <person name="Jin Z."/>
            <person name="Lee D."/>
            <person name="Yun J.H."/>
            <person name="Lee W."/>
        </authorList>
    </citation>
    <scope>SUBUNIT</scope>
</reference>
<accession>Q9Y5U8</accession>
<accession>B2R5I7</accession>
<accession>Q5TI66</accession>
<accession>Q9HB67</accession>
<accession>Q9UQN4</accession>
<protein>
    <recommendedName>
        <fullName>Mitochondrial pyruvate carrier 1</fullName>
    </recommendedName>
    <alternativeName>
        <fullName>Brain protein 44-like protein</fullName>
    </alternativeName>
</protein>
<keyword id="KW-0002">3D-structure</keyword>
<keyword id="KW-0007">Acetylation</keyword>
<keyword id="KW-0225">Disease variant</keyword>
<keyword id="KW-0472">Membrane</keyword>
<keyword id="KW-0496">Mitochondrion</keyword>
<keyword id="KW-0999">Mitochondrion inner membrane</keyword>
<keyword id="KW-1267">Proteomics identification</keyword>
<keyword id="KW-1185">Reference proteome</keyword>
<keyword id="KW-0812">Transmembrane</keyword>
<keyword id="KW-1133">Transmembrane helix</keyword>
<keyword id="KW-0813">Transport</keyword>
<organism>
    <name type="scientific">Homo sapiens</name>
    <name type="common">Human</name>
    <dbReference type="NCBI Taxonomy" id="9606"/>
    <lineage>
        <taxon>Eukaryota</taxon>
        <taxon>Metazoa</taxon>
        <taxon>Chordata</taxon>
        <taxon>Craniata</taxon>
        <taxon>Vertebrata</taxon>
        <taxon>Euteleostomi</taxon>
        <taxon>Mammalia</taxon>
        <taxon>Eutheria</taxon>
        <taxon>Euarchontoglires</taxon>
        <taxon>Primates</taxon>
        <taxon>Haplorrhini</taxon>
        <taxon>Catarrhini</taxon>
        <taxon>Hominidae</taxon>
        <taxon>Homo</taxon>
    </lineage>
</organism>
<dbReference type="EMBL" id="AF125101">
    <property type="protein sequence ID" value="AAD39918.1"/>
    <property type="molecule type" value="mRNA"/>
</dbReference>
<dbReference type="EMBL" id="AF151887">
    <property type="protein sequence ID" value="AAD34124.1"/>
    <property type="molecule type" value="mRNA"/>
</dbReference>
<dbReference type="EMBL" id="AK312201">
    <property type="protein sequence ID" value="BAG35134.1"/>
    <property type="molecule type" value="mRNA"/>
</dbReference>
<dbReference type="EMBL" id="AL022069">
    <property type="status" value="NOT_ANNOTATED_CDS"/>
    <property type="molecule type" value="Genomic_DNA"/>
</dbReference>
<dbReference type="EMBL" id="BC000810">
    <property type="protein sequence ID" value="AAH00810.1"/>
    <property type="molecule type" value="mRNA"/>
</dbReference>
<dbReference type="EMBL" id="AF275811">
    <property type="protein sequence ID" value="AAG23822.1"/>
    <property type="status" value="ALT_INIT"/>
    <property type="molecule type" value="mRNA"/>
</dbReference>
<dbReference type="CCDS" id="CCDS5293.1"/>
<dbReference type="RefSeq" id="NP_057182.1">
    <property type="nucleotide sequence ID" value="NM_016098.4"/>
</dbReference>
<dbReference type="PDB" id="8YW6">
    <property type="method" value="EM"/>
    <property type="resolution" value="3.18 A"/>
    <property type="chains" value="A=1-109"/>
</dbReference>
<dbReference type="PDB" id="8YW8">
    <property type="method" value="EM"/>
    <property type="resolution" value="3.17 A"/>
    <property type="chains" value="A=1-109"/>
</dbReference>
<dbReference type="PDB" id="8YW9">
    <property type="method" value="EM"/>
    <property type="resolution" value="3.01 A"/>
    <property type="chains" value="A=1-109"/>
</dbReference>
<dbReference type="PDB" id="9KNW">
    <property type="method" value="EM"/>
    <property type="resolution" value="3.41 A"/>
    <property type="chains" value="A=1-109"/>
</dbReference>
<dbReference type="PDB" id="9KNX">
    <property type="method" value="EM"/>
    <property type="resolution" value="3.72 A"/>
    <property type="chains" value="A=1-109"/>
</dbReference>
<dbReference type="PDB" id="9KNY">
    <property type="method" value="EM"/>
    <property type="resolution" value="3.40 A"/>
    <property type="chains" value="A=1-109"/>
</dbReference>
<dbReference type="PDB" id="9MNW">
    <property type="method" value="EM"/>
    <property type="resolution" value="3.35 A"/>
    <property type="chains" value="A=1-109"/>
</dbReference>
<dbReference type="PDB" id="9MNX">
    <property type="method" value="EM"/>
    <property type="resolution" value="3.11 A"/>
    <property type="chains" value="A=1-109"/>
</dbReference>
<dbReference type="PDB" id="9MNY">
    <property type="method" value="EM"/>
    <property type="resolution" value="2.78 A"/>
    <property type="chains" value="A=1-109"/>
</dbReference>
<dbReference type="PDB" id="9MNZ">
    <property type="method" value="EM"/>
    <property type="resolution" value="2.73 A"/>
    <property type="chains" value="A=1-109"/>
</dbReference>
<dbReference type="PDB" id="9MO0">
    <property type="method" value="EM"/>
    <property type="resolution" value="2.83 A"/>
    <property type="chains" value="A=1-109"/>
</dbReference>
<dbReference type="PDBsum" id="8YW6"/>
<dbReference type="PDBsum" id="8YW8"/>
<dbReference type="PDBsum" id="8YW9"/>
<dbReference type="PDBsum" id="9KNW"/>
<dbReference type="PDBsum" id="9KNX"/>
<dbReference type="PDBsum" id="9KNY"/>
<dbReference type="PDBsum" id="9MNW"/>
<dbReference type="PDBsum" id="9MNX"/>
<dbReference type="PDBsum" id="9MNY"/>
<dbReference type="PDBsum" id="9MNZ"/>
<dbReference type="PDBsum" id="9MO0"/>
<dbReference type="EMDB" id="EMD-39624"/>
<dbReference type="EMDB" id="EMD-39625"/>
<dbReference type="EMDB" id="EMD-39626"/>
<dbReference type="EMDB" id="EMD-48441"/>
<dbReference type="EMDB" id="EMD-48442"/>
<dbReference type="EMDB" id="EMD-48443"/>
<dbReference type="EMDB" id="EMD-48444"/>
<dbReference type="EMDB" id="EMD-48445"/>
<dbReference type="EMDB" id="EMD-62464"/>
<dbReference type="EMDB" id="EMD-62465"/>
<dbReference type="EMDB" id="EMD-62466"/>
<dbReference type="SMR" id="Q9Y5U8"/>
<dbReference type="BioGRID" id="119665">
    <property type="interactions" value="7"/>
</dbReference>
<dbReference type="ComplexPortal" id="CPX-6154">
    <property type="entry name" value="Mitochondrial pyruvate carrier complex"/>
</dbReference>
<dbReference type="CORUM" id="Q9Y5U8"/>
<dbReference type="FunCoup" id="Q9Y5U8">
    <property type="interactions" value="1633"/>
</dbReference>
<dbReference type="IntAct" id="Q9Y5U8">
    <property type="interactions" value="5"/>
</dbReference>
<dbReference type="STRING" id="9606.ENSP00000354223"/>
<dbReference type="BindingDB" id="Q9Y5U8"/>
<dbReference type="TCDB" id="2.A.105.1.2">
    <property type="family name" value="the mitochondrial pyruvate carrier (mpc) family"/>
</dbReference>
<dbReference type="iPTMnet" id="Q9Y5U8"/>
<dbReference type="PhosphoSitePlus" id="Q9Y5U8"/>
<dbReference type="SwissPalm" id="Q9Y5U8"/>
<dbReference type="BioMuta" id="MPC1"/>
<dbReference type="jPOST" id="Q9Y5U8"/>
<dbReference type="MassIVE" id="Q9Y5U8"/>
<dbReference type="PaxDb" id="9606-ENSP00000354223"/>
<dbReference type="PeptideAtlas" id="Q9Y5U8"/>
<dbReference type="ProteomicsDB" id="86511"/>
<dbReference type="Pumba" id="Q9Y5U8"/>
<dbReference type="TopDownProteomics" id="Q9Y5U8"/>
<dbReference type="Antibodypedia" id="49022">
    <property type="antibodies" value="143 antibodies from 25 providers"/>
</dbReference>
<dbReference type="DNASU" id="51660"/>
<dbReference type="Ensembl" id="ENST00000360961.11">
    <property type="protein sequence ID" value="ENSP00000354223.6"/>
    <property type="gene ID" value="ENSG00000060762.20"/>
</dbReference>
<dbReference type="GeneID" id="51660"/>
<dbReference type="KEGG" id="hsa:51660"/>
<dbReference type="MANE-Select" id="ENST00000360961.11">
    <property type="protein sequence ID" value="ENSP00000354223.6"/>
    <property type="RefSeq nucleotide sequence ID" value="NM_016098.4"/>
    <property type="RefSeq protein sequence ID" value="NP_057182.1"/>
</dbReference>
<dbReference type="UCSC" id="uc063svb.1">
    <property type="organism name" value="human"/>
</dbReference>
<dbReference type="AGR" id="HGNC:21606"/>
<dbReference type="CTD" id="51660"/>
<dbReference type="DisGeNET" id="51660"/>
<dbReference type="GeneCards" id="MPC1"/>
<dbReference type="HGNC" id="HGNC:21606">
    <property type="gene designation" value="MPC1"/>
</dbReference>
<dbReference type="HPA" id="ENSG00000060762">
    <property type="expression patterns" value="Tissue enhanced (heart muscle, tongue)"/>
</dbReference>
<dbReference type="MalaCards" id="MPC1"/>
<dbReference type="MIM" id="614738">
    <property type="type" value="gene"/>
</dbReference>
<dbReference type="MIM" id="614741">
    <property type="type" value="phenotype"/>
</dbReference>
<dbReference type="neXtProt" id="NX_Q9Y5U8"/>
<dbReference type="OpenTargets" id="ENSG00000060762"/>
<dbReference type="Orphanet" id="447784">
    <property type="disease" value="Mitochondrial pyruvate carrier deficiency"/>
</dbReference>
<dbReference type="PharmGKB" id="PA134940737"/>
<dbReference type="VEuPathDB" id="HostDB:ENSG00000060762"/>
<dbReference type="eggNOG" id="KOG1590">
    <property type="taxonomic scope" value="Eukaryota"/>
</dbReference>
<dbReference type="GeneTree" id="ENSGT00510000046988"/>
<dbReference type="HOGENOM" id="CLU_099502_3_2_1"/>
<dbReference type="InParanoid" id="Q9Y5U8"/>
<dbReference type="OMA" id="CTTHFWG"/>
<dbReference type="OrthoDB" id="1697690at2759"/>
<dbReference type="PAN-GO" id="Q9Y5U8">
    <property type="GO annotations" value="3 GO annotations based on evolutionary models"/>
</dbReference>
<dbReference type="PhylomeDB" id="Q9Y5U8"/>
<dbReference type="TreeFam" id="TF314444"/>
<dbReference type="PathwayCommons" id="Q9Y5U8"/>
<dbReference type="Reactome" id="R-HSA-70268">
    <property type="pathway name" value="Pyruvate metabolism"/>
</dbReference>
<dbReference type="SignaLink" id="Q9Y5U8"/>
<dbReference type="BioGRID-ORCS" id="51660">
    <property type="hits" value="11 hits in 1157 CRISPR screens"/>
</dbReference>
<dbReference type="ChiTaRS" id="MPC1">
    <property type="organism name" value="human"/>
</dbReference>
<dbReference type="GenomeRNAi" id="51660"/>
<dbReference type="Pharos" id="Q9Y5U8">
    <property type="development level" value="Tbio"/>
</dbReference>
<dbReference type="PRO" id="PR:Q9Y5U8"/>
<dbReference type="Proteomes" id="UP000005640">
    <property type="component" value="Chromosome 6"/>
</dbReference>
<dbReference type="RNAct" id="Q9Y5U8">
    <property type="molecule type" value="protein"/>
</dbReference>
<dbReference type="Bgee" id="ENSG00000060762">
    <property type="expression patterns" value="Expressed in heart right ventricle and 201 other cell types or tissues"/>
</dbReference>
<dbReference type="ExpressionAtlas" id="Q9Y5U8">
    <property type="expression patterns" value="baseline and differential"/>
</dbReference>
<dbReference type="GO" id="GO:0098800">
    <property type="term" value="C:inner mitochondrial membrane protein complex"/>
    <property type="evidence" value="ECO:0000250"/>
    <property type="project" value="ComplexPortal"/>
</dbReference>
<dbReference type="GO" id="GO:0005743">
    <property type="term" value="C:mitochondrial inner membrane"/>
    <property type="evidence" value="ECO:0000314"/>
    <property type="project" value="UniProtKB"/>
</dbReference>
<dbReference type="GO" id="GO:0005739">
    <property type="term" value="C:mitochondrion"/>
    <property type="evidence" value="ECO:0000314"/>
    <property type="project" value="HPA"/>
</dbReference>
<dbReference type="GO" id="GO:0050833">
    <property type="term" value="F:pyruvate transmembrane transporter activity"/>
    <property type="evidence" value="ECO:0000318"/>
    <property type="project" value="GO_Central"/>
</dbReference>
<dbReference type="GO" id="GO:0006850">
    <property type="term" value="P:mitochondrial pyruvate transmembrane transport"/>
    <property type="evidence" value="ECO:0000314"/>
    <property type="project" value="UniProtKB"/>
</dbReference>
<dbReference type="InterPro" id="IPR005336">
    <property type="entry name" value="MPC"/>
</dbReference>
<dbReference type="PANTHER" id="PTHR14154">
    <property type="entry name" value="UPF0041 BRAIN PROTEIN 44-RELATED"/>
    <property type="match status" value="1"/>
</dbReference>
<dbReference type="Pfam" id="PF03650">
    <property type="entry name" value="MPC"/>
    <property type="match status" value="1"/>
</dbReference>
<proteinExistence type="evidence at protein level"/>
<sequence length="109" mass="12347">MAGALVRKAADYVRSKDFRDYLMSTHFWGPVANWGLPIAAINDMKKSPEIISGRMTFALCCYSLTFMRFAYKVQPRNWLLFACHATNEVAQLIQGGRLIKHEMTKTASA</sequence>
<feature type="initiator methionine" description="Removed" evidence="9">
    <location>
        <position position="1"/>
    </location>
</feature>
<feature type="chain" id="PRO_0000212797" description="Mitochondrial pyruvate carrier 1">
    <location>
        <begin position="2"/>
        <end position="109"/>
    </location>
</feature>
<feature type="topological domain" description="Mitochondrial matrix" evidence="8">
    <location>
        <begin position="2"/>
        <end position="20"/>
    </location>
</feature>
<feature type="transmembrane region" description="Helical" evidence="2">
    <location>
        <begin position="21"/>
        <end position="41"/>
    </location>
</feature>
<feature type="topological domain" description="Mitochondrial intermembrane" evidence="8">
    <location>
        <begin position="42"/>
        <end position="52"/>
    </location>
</feature>
<feature type="transmembrane region" description="Helical" evidence="2">
    <location>
        <begin position="53"/>
        <end position="71"/>
    </location>
</feature>
<feature type="topological domain" description="Mitochondrial matrix" evidence="8">
    <location>
        <begin position="72"/>
        <end position="109"/>
    </location>
</feature>
<feature type="modified residue" description="N-acetylalanine" evidence="9">
    <location>
        <position position="2"/>
    </location>
</feature>
<feature type="modified residue" description="N6-acetyllysine" evidence="1">
    <location>
        <position position="72"/>
    </location>
</feature>
<feature type="sequence variant" id="VAR_052486" description="In dbSNP:rs11557064.">
    <original>L</original>
    <variation>I</variation>
    <location>
        <position position="36"/>
    </location>
</feature>
<feature type="sequence variant" id="VAR_068099" description="In MPYCD; dbSNP:rs387907238." evidence="3">
    <original>L</original>
    <variation>H</variation>
    <location>
        <position position="79"/>
    </location>
</feature>
<feature type="sequence variant" id="VAR_068100" description="In MPYCD; inactive; dbSNP:rs387907237." evidence="3">
    <original>R</original>
    <variation>W</variation>
    <location>
        <position position="97"/>
    </location>
</feature>
<feature type="sequence conflict" description="In Ref. 2; AAD34124." evidence="7" ref="2">
    <original>R</original>
    <variation>Q</variation>
    <location>
        <position position="14"/>
    </location>
</feature>